<keyword id="KW-0325">Glycoprotein</keyword>
<keyword id="KW-0378">Hydrolase</keyword>
<keyword id="KW-0442">Lipid degradation</keyword>
<keyword id="KW-0443">Lipid metabolism</keyword>
<keyword id="KW-1185">Reference proteome</keyword>
<keyword id="KW-0964">Secreted</keyword>
<keyword id="KW-0732">Signal</keyword>
<dbReference type="EC" id="3.1.1.-"/>
<dbReference type="EMBL" id="AL391144">
    <property type="protein sequence ID" value="CAC01771.1"/>
    <property type="status" value="ALT_SEQ"/>
    <property type="molecule type" value="Genomic_DNA"/>
</dbReference>
<dbReference type="EMBL" id="CP002688">
    <property type="protein sequence ID" value="AED92196.1"/>
    <property type="molecule type" value="Genomic_DNA"/>
</dbReference>
<dbReference type="EMBL" id="AY084802">
    <property type="protein sequence ID" value="AAM61368.1"/>
    <property type="molecule type" value="mRNA"/>
</dbReference>
<dbReference type="PIR" id="T51401">
    <property type="entry name" value="T51401"/>
</dbReference>
<dbReference type="RefSeq" id="NP_568318.1">
    <property type="nucleotide sequence ID" value="NM_121576.2"/>
</dbReference>
<dbReference type="SMR" id="Q8LFJ9"/>
<dbReference type="FunCoup" id="Q8LFJ9">
    <property type="interactions" value="93"/>
</dbReference>
<dbReference type="STRING" id="3702.Q8LFJ9"/>
<dbReference type="GlyCosmos" id="Q8LFJ9">
    <property type="glycosylation" value="4 sites, No reported glycans"/>
</dbReference>
<dbReference type="GlyGen" id="Q8LFJ9">
    <property type="glycosylation" value="4 sites"/>
</dbReference>
<dbReference type="PaxDb" id="3702-AT5G15720.1"/>
<dbReference type="ProteomicsDB" id="247255"/>
<dbReference type="EnsemblPlants" id="AT5G15720.1">
    <property type="protein sequence ID" value="AT5G15720.1"/>
    <property type="gene ID" value="AT5G15720"/>
</dbReference>
<dbReference type="GeneID" id="831427"/>
<dbReference type="Gramene" id="AT5G15720.1">
    <property type="protein sequence ID" value="AT5G15720.1"/>
    <property type="gene ID" value="AT5G15720"/>
</dbReference>
<dbReference type="KEGG" id="ath:AT5G15720"/>
<dbReference type="Araport" id="AT5G15720"/>
<dbReference type="TAIR" id="AT5G15720">
    <property type="gene designation" value="GLIP7"/>
</dbReference>
<dbReference type="eggNOG" id="ENOG502QPV1">
    <property type="taxonomic scope" value="Eukaryota"/>
</dbReference>
<dbReference type="HOGENOM" id="CLU_015101_0_0_1"/>
<dbReference type="InParanoid" id="Q8LFJ9"/>
<dbReference type="OMA" id="NHHPLAP"/>
<dbReference type="PhylomeDB" id="Q8LFJ9"/>
<dbReference type="BioCyc" id="ARA:AT5G15720-MONOMER"/>
<dbReference type="PRO" id="PR:Q8LFJ9"/>
<dbReference type="Proteomes" id="UP000006548">
    <property type="component" value="Chromosome 5"/>
</dbReference>
<dbReference type="ExpressionAtlas" id="Q8LFJ9">
    <property type="expression patterns" value="baseline and differential"/>
</dbReference>
<dbReference type="GO" id="GO:0005576">
    <property type="term" value="C:extracellular region"/>
    <property type="evidence" value="ECO:0007669"/>
    <property type="project" value="UniProtKB-SubCell"/>
</dbReference>
<dbReference type="GO" id="GO:0016298">
    <property type="term" value="F:lipase activity"/>
    <property type="evidence" value="ECO:0000250"/>
    <property type="project" value="TAIR"/>
</dbReference>
<dbReference type="GO" id="GO:0016042">
    <property type="term" value="P:lipid catabolic process"/>
    <property type="evidence" value="ECO:0007669"/>
    <property type="project" value="UniProtKB-KW"/>
</dbReference>
<dbReference type="CDD" id="cd01837">
    <property type="entry name" value="SGNH_plant_lipase_like"/>
    <property type="match status" value="1"/>
</dbReference>
<dbReference type="Gene3D" id="3.40.50.1110">
    <property type="entry name" value="SGNH hydrolase"/>
    <property type="match status" value="1"/>
</dbReference>
<dbReference type="InterPro" id="IPR001087">
    <property type="entry name" value="GDSL"/>
</dbReference>
<dbReference type="InterPro" id="IPR051238">
    <property type="entry name" value="GDSL_esterase/lipase"/>
</dbReference>
<dbReference type="InterPro" id="IPR036514">
    <property type="entry name" value="SGNH_hydro_sf"/>
</dbReference>
<dbReference type="InterPro" id="IPR035669">
    <property type="entry name" value="SGNH_plant_lipase-like"/>
</dbReference>
<dbReference type="PANTHER" id="PTHR45650:SF79">
    <property type="entry name" value="GDSL ESTERASE_LIPASE 7"/>
    <property type="match status" value="1"/>
</dbReference>
<dbReference type="PANTHER" id="PTHR45650">
    <property type="entry name" value="GDSL-LIKE LIPASE/ACYLHYDROLASE-RELATED"/>
    <property type="match status" value="1"/>
</dbReference>
<dbReference type="Pfam" id="PF00657">
    <property type="entry name" value="Lipase_GDSL"/>
    <property type="match status" value="1"/>
</dbReference>
<dbReference type="SUPFAM" id="SSF52266">
    <property type="entry name" value="SGNH hydrolase"/>
    <property type="match status" value="1"/>
</dbReference>
<gene>
    <name type="primary">GLIP7</name>
    <name type="ordered locus">At5g15720</name>
    <name type="ORF">F14F8.100</name>
</gene>
<reference key="1">
    <citation type="journal article" date="2000" name="Nature">
        <title>Sequence and analysis of chromosome 5 of the plant Arabidopsis thaliana.</title>
        <authorList>
            <person name="Tabata S."/>
            <person name="Kaneko T."/>
            <person name="Nakamura Y."/>
            <person name="Kotani H."/>
            <person name="Kato T."/>
            <person name="Asamizu E."/>
            <person name="Miyajima N."/>
            <person name="Sasamoto S."/>
            <person name="Kimura T."/>
            <person name="Hosouchi T."/>
            <person name="Kawashima K."/>
            <person name="Kohara M."/>
            <person name="Matsumoto M."/>
            <person name="Matsuno A."/>
            <person name="Muraki A."/>
            <person name="Nakayama S."/>
            <person name="Nakazaki N."/>
            <person name="Naruo K."/>
            <person name="Okumura S."/>
            <person name="Shinpo S."/>
            <person name="Takeuchi C."/>
            <person name="Wada T."/>
            <person name="Watanabe A."/>
            <person name="Yamada M."/>
            <person name="Yasuda M."/>
            <person name="Sato S."/>
            <person name="de la Bastide M."/>
            <person name="Huang E."/>
            <person name="Spiegel L."/>
            <person name="Gnoj L."/>
            <person name="O'Shaughnessy A."/>
            <person name="Preston R."/>
            <person name="Habermann K."/>
            <person name="Murray J."/>
            <person name="Johnson D."/>
            <person name="Rohlfing T."/>
            <person name="Nelson J."/>
            <person name="Stoneking T."/>
            <person name="Pepin K."/>
            <person name="Spieth J."/>
            <person name="Sekhon M."/>
            <person name="Armstrong J."/>
            <person name="Becker M."/>
            <person name="Belter E."/>
            <person name="Cordum H."/>
            <person name="Cordes M."/>
            <person name="Courtney L."/>
            <person name="Courtney W."/>
            <person name="Dante M."/>
            <person name="Du H."/>
            <person name="Edwards J."/>
            <person name="Fryman J."/>
            <person name="Haakensen B."/>
            <person name="Lamar E."/>
            <person name="Latreille P."/>
            <person name="Leonard S."/>
            <person name="Meyer R."/>
            <person name="Mulvaney E."/>
            <person name="Ozersky P."/>
            <person name="Riley A."/>
            <person name="Strowmatt C."/>
            <person name="Wagner-McPherson C."/>
            <person name="Wollam A."/>
            <person name="Yoakum M."/>
            <person name="Bell M."/>
            <person name="Dedhia N."/>
            <person name="Parnell L."/>
            <person name="Shah R."/>
            <person name="Rodriguez M."/>
            <person name="Hoon See L."/>
            <person name="Vil D."/>
            <person name="Baker J."/>
            <person name="Kirchoff K."/>
            <person name="Toth K."/>
            <person name="King L."/>
            <person name="Bahret A."/>
            <person name="Miller B."/>
            <person name="Marra M.A."/>
            <person name="Martienssen R."/>
            <person name="McCombie W.R."/>
            <person name="Wilson R.K."/>
            <person name="Murphy G."/>
            <person name="Bancroft I."/>
            <person name="Volckaert G."/>
            <person name="Wambutt R."/>
            <person name="Duesterhoeft A."/>
            <person name="Stiekema W."/>
            <person name="Pohl T."/>
            <person name="Entian K.-D."/>
            <person name="Terryn N."/>
            <person name="Hartley N."/>
            <person name="Bent E."/>
            <person name="Johnson S."/>
            <person name="Langham S.-A."/>
            <person name="McCullagh B."/>
            <person name="Robben J."/>
            <person name="Grymonprez B."/>
            <person name="Zimmermann W."/>
            <person name="Ramsperger U."/>
            <person name="Wedler H."/>
            <person name="Balke K."/>
            <person name="Wedler E."/>
            <person name="Peters S."/>
            <person name="van Staveren M."/>
            <person name="Dirkse W."/>
            <person name="Mooijman P."/>
            <person name="Klein Lankhorst R."/>
            <person name="Weitzenegger T."/>
            <person name="Bothe G."/>
            <person name="Rose M."/>
            <person name="Hauf J."/>
            <person name="Berneiser S."/>
            <person name="Hempel S."/>
            <person name="Feldpausch M."/>
            <person name="Lamberth S."/>
            <person name="Villarroel R."/>
            <person name="Gielen J."/>
            <person name="Ardiles W."/>
            <person name="Bents O."/>
            <person name="Lemcke K."/>
            <person name="Kolesov G."/>
            <person name="Mayer K.F.X."/>
            <person name="Rudd S."/>
            <person name="Schoof H."/>
            <person name="Schueller C."/>
            <person name="Zaccaria P."/>
            <person name="Mewes H.-W."/>
            <person name="Bevan M."/>
            <person name="Fransz P.F."/>
        </authorList>
    </citation>
    <scope>NUCLEOTIDE SEQUENCE [LARGE SCALE GENOMIC DNA]</scope>
    <source>
        <strain>cv. Columbia</strain>
    </source>
</reference>
<reference key="2">
    <citation type="journal article" date="2017" name="Plant J.">
        <title>Araport11: a complete reannotation of the Arabidopsis thaliana reference genome.</title>
        <authorList>
            <person name="Cheng C.Y."/>
            <person name="Krishnakumar V."/>
            <person name="Chan A.P."/>
            <person name="Thibaud-Nissen F."/>
            <person name="Schobel S."/>
            <person name="Town C.D."/>
        </authorList>
    </citation>
    <scope>GENOME REANNOTATION</scope>
    <source>
        <strain>cv. Columbia</strain>
    </source>
</reference>
<reference key="3">
    <citation type="submission" date="2002-03" db="EMBL/GenBank/DDBJ databases">
        <title>Full-length cDNA from Arabidopsis thaliana.</title>
        <authorList>
            <person name="Brover V.V."/>
            <person name="Troukhan M.E."/>
            <person name="Alexandrov N.A."/>
            <person name="Lu Y.-P."/>
            <person name="Flavell R.B."/>
            <person name="Feldmann K.A."/>
        </authorList>
    </citation>
    <scope>NUCLEOTIDE SEQUENCE [LARGE SCALE MRNA]</scope>
</reference>
<reference key="4">
    <citation type="journal article" date="2004" name="Prog. Lipid Res.">
        <title>GDSL family of serine esterases/lipases.</title>
        <authorList>
            <person name="Akoh C.C."/>
            <person name="Lee G.-C."/>
            <person name="Liaw Y.-C."/>
            <person name="Huang T.-H."/>
            <person name="Shaw J.-F."/>
        </authorList>
    </citation>
    <scope>REVIEW</scope>
</reference>
<reference key="5">
    <citation type="journal article" date="2005" name="Plant Cell">
        <title>Secretome analysis reveals an Arabidopsis lipase involved in defense against Alternaria brassicicola.</title>
        <authorList>
            <person name="Oh I.S."/>
            <person name="Park A.R."/>
            <person name="Bae M.S."/>
            <person name="Kwon S.J."/>
            <person name="Kim Y.S."/>
            <person name="Lee J.E."/>
            <person name="Kang N.Y."/>
            <person name="Lee S."/>
            <person name="Cheong H."/>
            <person name="Park O.K."/>
        </authorList>
    </citation>
    <scope>GENE FAMILY</scope>
</reference>
<reference key="6">
    <citation type="journal article" date="2008" name="Pak. J. Biol. Sci.">
        <title>Sequence analysis of GDSL lipase gene family in Arabidopsis thaliana.</title>
        <authorList>
            <person name="Ling H."/>
        </authorList>
    </citation>
    <scope>GENE FAMILY</scope>
</reference>
<feature type="signal peptide" evidence="2">
    <location>
        <begin position="1"/>
        <end position="19"/>
    </location>
</feature>
<feature type="chain" id="PRO_0000367340" description="GDSL esterase/lipase 7">
    <location>
        <begin position="20"/>
        <end position="364"/>
    </location>
</feature>
<feature type="active site" description="Nucleophile" evidence="1">
    <location>
        <position position="37"/>
    </location>
</feature>
<feature type="active site" evidence="1">
    <location>
        <position position="329"/>
    </location>
</feature>
<feature type="active site" evidence="1">
    <location>
        <position position="332"/>
    </location>
</feature>
<feature type="glycosylation site" description="N-linked (GlcNAc...) asparagine" evidence="2">
    <location>
        <position position="236"/>
    </location>
</feature>
<feature type="glycosylation site" description="N-linked (GlcNAc...) asparagine" evidence="2">
    <location>
        <position position="237"/>
    </location>
</feature>
<feature type="glycosylation site" description="N-linked (GlcNAc...) asparagine" evidence="2">
    <location>
        <position position="264"/>
    </location>
</feature>
<feature type="glycosylation site" description="N-linked (GlcNAc...) asparagine" evidence="2">
    <location>
        <position position="351"/>
    </location>
</feature>
<evidence type="ECO:0000250" key="1"/>
<evidence type="ECO:0000255" key="2"/>
<evidence type="ECO:0000305" key="3"/>
<accession>Q8LFJ9</accession>
<accession>Q9LFV4</accession>
<proteinExistence type="evidence at transcript level"/>
<sequence>MKSLLICLVLLELVWLGNGQSRDHQPLAPAFFVFGDSLVDSGNNNYIPTLARANYFPYGIDFGFPTGRFCNGRTVVDYGATYLGLPLVPPYLSPLSIGQNALRGVNYASAAAGILDETGRHYGARTTFNGQISQFEITIELRLRRFFQNPADLRKYLAKSIIGINIGSNDYINNYLMPERYSTSQTYSGEDYADLLIKTLSAQISRLYNLGARKMVLAGSGPLGCIPSQLSMVTGNNTSGCVTKINNMVSMFNSRLKDLANTLNTTLPGSFFVYQNVFDLFHDMVVNPSRYGLVVSNEACCGNGRYGGALTCLPLQQPCLDRNQYVFWDAFHPTETANKIIAHNTFSKSANYSYPISVYELAKL</sequence>
<protein>
    <recommendedName>
        <fullName>GDSL esterase/lipase 7</fullName>
        <ecNumber>3.1.1.-</ecNumber>
    </recommendedName>
    <alternativeName>
        <fullName>Extracellular lipase 7</fullName>
    </alternativeName>
</protein>
<organism>
    <name type="scientific">Arabidopsis thaliana</name>
    <name type="common">Mouse-ear cress</name>
    <dbReference type="NCBI Taxonomy" id="3702"/>
    <lineage>
        <taxon>Eukaryota</taxon>
        <taxon>Viridiplantae</taxon>
        <taxon>Streptophyta</taxon>
        <taxon>Embryophyta</taxon>
        <taxon>Tracheophyta</taxon>
        <taxon>Spermatophyta</taxon>
        <taxon>Magnoliopsida</taxon>
        <taxon>eudicotyledons</taxon>
        <taxon>Gunneridae</taxon>
        <taxon>Pentapetalae</taxon>
        <taxon>rosids</taxon>
        <taxon>malvids</taxon>
        <taxon>Brassicales</taxon>
        <taxon>Brassicaceae</taxon>
        <taxon>Camelineae</taxon>
        <taxon>Arabidopsis</taxon>
    </lineage>
</organism>
<name>GLIP7_ARATH</name>
<comment type="subcellular location">
    <subcellularLocation>
        <location evidence="1">Secreted</location>
    </subcellularLocation>
</comment>
<comment type="similarity">
    <text evidence="3">Belongs to the 'GDSL' lipolytic enzyme family.</text>
</comment>
<comment type="sequence caution" evidence="3">
    <conflict type="erroneous gene model prediction">
        <sequence resource="EMBL-CDS" id="CAC01771"/>
    </conflict>
</comment>